<gene>
    <name evidence="1" type="primary">yaeP</name>
    <name type="ordered locus">STM0238</name>
</gene>
<protein>
    <recommendedName>
        <fullName evidence="1">UPF0253 protein YaeP</fullName>
    </recommendedName>
</protein>
<evidence type="ECO:0000255" key="1">
    <source>
        <dbReference type="HAMAP-Rule" id="MF_01064"/>
    </source>
</evidence>
<evidence type="ECO:0000305" key="2"/>
<keyword id="KW-1185">Reference proteome</keyword>
<name>YAEP_SALTY</name>
<comment type="similarity">
    <text evidence="1">Belongs to the UPF0253 family.</text>
</comment>
<comment type="sequence caution" evidence="2">
    <conflict type="erroneous initiation">
        <sequence resource="EMBL-CDS" id="AAL19202"/>
    </conflict>
</comment>
<dbReference type="EMBL" id="AE006468">
    <property type="protein sequence ID" value="AAL19202.1"/>
    <property type="status" value="ALT_INIT"/>
    <property type="molecule type" value="Genomic_DNA"/>
</dbReference>
<dbReference type="RefSeq" id="NP_459243.1">
    <property type="nucleotide sequence ID" value="NC_003197.2"/>
</dbReference>
<dbReference type="RefSeq" id="WP_000955207.1">
    <property type="nucleotide sequence ID" value="NC_003197.2"/>
</dbReference>
<dbReference type="SMR" id="P67551"/>
<dbReference type="STRING" id="99287.STM0238"/>
<dbReference type="PaxDb" id="99287-STM0238"/>
<dbReference type="GeneID" id="1251756"/>
<dbReference type="KEGG" id="stm:STM0238"/>
<dbReference type="PATRIC" id="fig|99287.12.peg.251"/>
<dbReference type="HOGENOM" id="CLU_190008_0_0_6"/>
<dbReference type="PhylomeDB" id="P67551"/>
<dbReference type="Proteomes" id="UP000001014">
    <property type="component" value="Chromosome"/>
</dbReference>
<dbReference type="HAMAP" id="MF_01064">
    <property type="entry name" value="UPF0253"/>
    <property type="match status" value="1"/>
</dbReference>
<dbReference type="InterPro" id="IPR009624">
    <property type="entry name" value="UPF0253"/>
</dbReference>
<dbReference type="NCBIfam" id="NF003436">
    <property type="entry name" value="PRK04964.1"/>
    <property type="match status" value="1"/>
</dbReference>
<dbReference type="Pfam" id="PF06786">
    <property type="entry name" value="UPF0253"/>
    <property type="match status" value="1"/>
</dbReference>
<accession>P67551</accession>
<accession>Q8XGR8</accession>
<reference key="1">
    <citation type="journal article" date="2001" name="Nature">
        <title>Complete genome sequence of Salmonella enterica serovar Typhimurium LT2.</title>
        <authorList>
            <person name="McClelland M."/>
            <person name="Sanderson K.E."/>
            <person name="Spieth J."/>
            <person name="Clifton S.W."/>
            <person name="Latreille P."/>
            <person name="Courtney L."/>
            <person name="Porwollik S."/>
            <person name="Ali J."/>
            <person name="Dante M."/>
            <person name="Du F."/>
            <person name="Hou S."/>
            <person name="Layman D."/>
            <person name="Leonard S."/>
            <person name="Nguyen C."/>
            <person name="Scott K."/>
            <person name="Holmes A."/>
            <person name="Grewal N."/>
            <person name="Mulvaney E."/>
            <person name="Ryan E."/>
            <person name="Sun H."/>
            <person name="Florea L."/>
            <person name="Miller W."/>
            <person name="Stoneking T."/>
            <person name="Nhan M."/>
            <person name="Waterston R."/>
            <person name="Wilson R.K."/>
        </authorList>
    </citation>
    <scope>NUCLEOTIDE SEQUENCE [LARGE SCALE GENOMIC DNA]</scope>
    <source>
        <strain>LT2 / SGSC1412 / ATCC 700720</strain>
    </source>
</reference>
<feature type="chain" id="PRO_0000215544" description="UPF0253 protein YaeP">
    <location>
        <begin position="1"/>
        <end position="66"/>
    </location>
</feature>
<organism>
    <name type="scientific">Salmonella typhimurium (strain LT2 / SGSC1412 / ATCC 700720)</name>
    <dbReference type="NCBI Taxonomy" id="99287"/>
    <lineage>
        <taxon>Bacteria</taxon>
        <taxon>Pseudomonadati</taxon>
        <taxon>Pseudomonadota</taxon>
        <taxon>Gammaproteobacteria</taxon>
        <taxon>Enterobacterales</taxon>
        <taxon>Enterobacteriaceae</taxon>
        <taxon>Salmonella</taxon>
    </lineage>
</organism>
<sequence length="66" mass="7156">MEKYCELVRKRYAEIASGDLGYVPDALGCVLKVLNEVAADSALSESVREKAAYAAANLLVSDYVNE</sequence>
<proteinExistence type="inferred from homology"/>